<gene>
    <name evidence="1" type="primary">rplD</name>
    <name type="ordered locus">CJJ81176_1703</name>
</gene>
<dbReference type="EMBL" id="CP000538">
    <property type="protein sequence ID" value="EAQ72729.2"/>
    <property type="molecule type" value="Genomic_DNA"/>
</dbReference>
<dbReference type="RefSeq" id="WP_002791636.1">
    <property type="nucleotide sequence ID" value="NC_008787.1"/>
</dbReference>
<dbReference type="SMR" id="A1W1V9"/>
<dbReference type="KEGG" id="cjj:CJJ81176_1703"/>
<dbReference type="eggNOG" id="COG0088">
    <property type="taxonomic scope" value="Bacteria"/>
</dbReference>
<dbReference type="HOGENOM" id="CLU_041575_5_2_7"/>
<dbReference type="Proteomes" id="UP000000646">
    <property type="component" value="Chromosome"/>
</dbReference>
<dbReference type="GO" id="GO:1990904">
    <property type="term" value="C:ribonucleoprotein complex"/>
    <property type="evidence" value="ECO:0007669"/>
    <property type="project" value="UniProtKB-KW"/>
</dbReference>
<dbReference type="GO" id="GO:0005840">
    <property type="term" value="C:ribosome"/>
    <property type="evidence" value="ECO:0007669"/>
    <property type="project" value="UniProtKB-KW"/>
</dbReference>
<dbReference type="GO" id="GO:0019843">
    <property type="term" value="F:rRNA binding"/>
    <property type="evidence" value="ECO:0007669"/>
    <property type="project" value="UniProtKB-UniRule"/>
</dbReference>
<dbReference type="GO" id="GO:0003735">
    <property type="term" value="F:structural constituent of ribosome"/>
    <property type="evidence" value="ECO:0007669"/>
    <property type="project" value="InterPro"/>
</dbReference>
<dbReference type="GO" id="GO:0006412">
    <property type="term" value="P:translation"/>
    <property type="evidence" value="ECO:0007669"/>
    <property type="project" value="UniProtKB-UniRule"/>
</dbReference>
<dbReference type="FunFam" id="3.40.1370.10:FF:000008">
    <property type="entry name" value="50S ribosomal protein L4"/>
    <property type="match status" value="1"/>
</dbReference>
<dbReference type="Gene3D" id="3.40.1370.10">
    <property type="match status" value="1"/>
</dbReference>
<dbReference type="HAMAP" id="MF_01328_B">
    <property type="entry name" value="Ribosomal_uL4_B"/>
    <property type="match status" value="1"/>
</dbReference>
<dbReference type="InterPro" id="IPR002136">
    <property type="entry name" value="Ribosomal_uL4"/>
</dbReference>
<dbReference type="InterPro" id="IPR013005">
    <property type="entry name" value="Ribosomal_uL4-like"/>
</dbReference>
<dbReference type="InterPro" id="IPR023574">
    <property type="entry name" value="Ribosomal_uL4_dom_sf"/>
</dbReference>
<dbReference type="NCBIfam" id="TIGR03953">
    <property type="entry name" value="rplD_bact"/>
    <property type="match status" value="1"/>
</dbReference>
<dbReference type="PANTHER" id="PTHR10746">
    <property type="entry name" value="50S RIBOSOMAL PROTEIN L4"/>
    <property type="match status" value="1"/>
</dbReference>
<dbReference type="PANTHER" id="PTHR10746:SF6">
    <property type="entry name" value="LARGE RIBOSOMAL SUBUNIT PROTEIN UL4M"/>
    <property type="match status" value="1"/>
</dbReference>
<dbReference type="Pfam" id="PF00573">
    <property type="entry name" value="Ribosomal_L4"/>
    <property type="match status" value="1"/>
</dbReference>
<dbReference type="SUPFAM" id="SSF52166">
    <property type="entry name" value="Ribosomal protein L4"/>
    <property type="match status" value="1"/>
</dbReference>
<proteinExistence type="inferred from homology"/>
<sequence length="204" mass="22155">MSKVVVLNDKLEKAGELDLPSKYAEVNPHNLYLYVKSYLASLRANTAHTKGRSDVSGGGKKPWRQKGRGGARAGSTRTNVWVGGAVAFGPTNERNYFQKVNKKQKRLALERALADKAAKGALFTADSLAIESGKTKDANAVIKKLGVKDALIVKDLLDEKTLLAYRNLANCYVVDVTEVNAYLVSVFNAVIIEKSALESITKEG</sequence>
<feature type="chain" id="PRO_1000052378" description="Large ribosomal subunit protein uL4">
    <location>
        <begin position="1"/>
        <end position="204"/>
    </location>
</feature>
<feature type="region of interest" description="Disordered" evidence="2">
    <location>
        <begin position="49"/>
        <end position="75"/>
    </location>
</feature>
<protein>
    <recommendedName>
        <fullName evidence="1">Large ribosomal subunit protein uL4</fullName>
    </recommendedName>
    <alternativeName>
        <fullName evidence="3">50S ribosomal protein L4</fullName>
    </alternativeName>
</protein>
<keyword id="KW-0687">Ribonucleoprotein</keyword>
<keyword id="KW-0689">Ribosomal protein</keyword>
<keyword id="KW-0694">RNA-binding</keyword>
<keyword id="KW-0699">rRNA-binding</keyword>
<reference key="1">
    <citation type="submission" date="2006-12" db="EMBL/GenBank/DDBJ databases">
        <authorList>
            <person name="Fouts D.E."/>
            <person name="Nelson K.E."/>
            <person name="Sebastian Y."/>
        </authorList>
    </citation>
    <scope>NUCLEOTIDE SEQUENCE [LARGE SCALE GENOMIC DNA]</scope>
    <source>
        <strain>81-176</strain>
    </source>
</reference>
<organism>
    <name type="scientific">Campylobacter jejuni subsp. jejuni serotype O:23/36 (strain 81-176)</name>
    <dbReference type="NCBI Taxonomy" id="354242"/>
    <lineage>
        <taxon>Bacteria</taxon>
        <taxon>Pseudomonadati</taxon>
        <taxon>Campylobacterota</taxon>
        <taxon>Epsilonproteobacteria</taxon>
        <taxon>Campylobacterales</taxon>
        <taxon>Campylobacteraceae</taxon>
        <taxon>Campylobacter</taxon>
    </lineage>
</organism>
<evidence type="ECO:0000255" key="1">
    <source>
        <dbReference type="HAMAP-Rule" id="MF_01328"/>
    </source>
</evidence>
<evidence type="ECO:0000256" key="2">
    <source>
        <dbReference type="SAM" id="MobiDB-lite"/>
    </source>
</evidence>
<evidence type="ECO:0000305" key="3"/>
<comment type="function">
    <text evidence="1">One of the primary rRNA binding proteins, this protein initially binds near the 5'-end of the 23S rRNA. It is important during the early stages of 50S assembly. It makes multiple contacts with different domains of the 23S rRNA in the assembled 50S subunit and ribosome.</text>
</comment>
<comment type="function">
    <text evidence="1">Forms part of the polypeptide exit tunnel.</text>
</comment>
<comment type="subunit">
    <text evidence="1">Part of the 50S ribosomal subunit.</text>
</comment>
<comment type="similarity">
    <text evidence="1">Belongs to the universal ribosomal protein uL4 family.</text>
</comment>
<name>RL4_CAMJJ</name>
<accession>A1W1V9</accession>